<protein>
    <recommendedName>
        <fullName evidence="1">GMP reductase</fullName>
        <ecNumber evidence="1">1.7.1.7</ecNumber>
    </recommendedName>
    <alternativeName>
        <fullName evidence="1">Guanosine 5'-monophosphate oxidoreductase</fullName>
        <shortName evidence="1">Guanosine monophosphate reductase</shortName>
    </alternativeName>
</protein>
<evidence type="ECO:0000255" key="1">
    <source>
        <dbReference type="HAMAP-Rule" id="MF_00596"/>
    </source>
</evidence>
<evidence type="ECO:0000305" key="2"/>
<keyword id="KW-0479">Metal-binding</keyword>
<keyword id="KW-0521">NADP</keyword>
<keyword id="KW-0560">Oxidoreductase</keyword>
<keyword id="KW-0630">Potassium</keyword>
<comment type="function">
    <text evidence="1">Catalyzes the irreversible NADPH-dependent deamination of GMP to IMP. It functions in the conversion of nucleobase, nucleoside and nucleotide derivatives of G to A nucleotides, and in maintaining the intracellular balance of A and G nucleotides.</text>
</comment>
<comment type="catalytic activity">
    <reaction evidence="1">
        <text>IMP + NH4(+) + NADP(+) = GMP + NADPH + 2 H(+)</text>
        <dbReference type="Rhea" id="RHEA:17185"/>
        <dbReference type="ChEBI" id="CHEBI:15378"/>
        <dbReference type="ChEBI" id="CHEBI:28938"/>
        <dbReference type="ChEBI" id="CHEBI:57783"/>
        <dbReference type="ChEBI" id="CHEBI:58053"/>
        <dbReference type="ChEBI" id="CHEBI:58115"/>
        <dbReference type="ChEBI" id="CHEBI:58349"/>
        <dbReference type="EC" id="1.7.1.7"/>
    </reaction>
</comment>
<comment type="subunit">
    <text evidence="1">Homotetramer.</text>
</comment>
<comment type="similarity">
    <text evidence="1">Belongs to the IMPDH/GMPR family. GuaC type 1 subfamily.</text>
</comment>
<comment type="sequence caution" evidence="2">
    <conflict type="erroneous initiation">
        <sequence resource="EMBL-CDS" id="BAC97205"/>
    </conflict>
</comment>
<organism>
    <name type="scientific">Vibrio vulnificus (strain YJ016)</name>
    <dbReference type="NCBI Taxonomy" id="196600"/>
    <lineage>
        <taxon>Bacteria</taxon>
        <taxon>Pseudomonadati</taxon>
        <taxon>Pseudomonadota</taxon>
        <taxon>Gammaproteobacteria</taxon>
        <taxon>Vibrionales</taxon>
        <taxon>Vibrionaceae</taxon>
        <taxon>Vibrio</taxon>
    </lineage>
</organism>
<gene>
    <name evidence="1" type="primary">guaC</name>
    <name type="ordered locus">VVA1179</name>
</gene>
<dbReference type="EC" id="1.7.1.7" evidence="1"/>
<dbReference type="EMBL" id="BA000038">
    <property type="protein sequence ID" value="BAC97205.1"/>
    <property type="status" value="ALT_INIT"/>
    <property type="molecule type" value="Genomic_DNA"/>
</dbReference>
<dbReference type="RefSeq" id="WP_011081644.1">
    <property type="nucleotide sequence ID" value="NC_005140.1"/>
</dbReference>
<dbReference type="SMR" id="Q7MD57"/>
<dbReference type="STRING" id="672.VV93_v1c41090"/>
<dbReference type="KEGG" id="vvy:VVA1179"/>
<dbReference type="PATRIC" id="fig|196600.6.peg.4337"/>
<dbReference type="eggNOG" id="COG0516">
    <property type="taxonomic scope" value="Bacteria"/>
</dbReference>
<dbReference type="HOGENOM" id="CLU_022552_5_3_6"/>
<dbReference type="Proteomes" id="UP000002675">
    <property type="component" value="Chromosome II"/>
</dbReference>
<dbReference type="GO" id="GO:0005829">
    <property type="term" value="C:cytosol"/>
    <property type="evidence" value="ECO:0007669"/>
    <property type="project" value="TreeGrafter"/>
</dbReference>
<dbReference type="GO" id="GO:1902560">
    <property type="term" value="C:GMP reductase complex"/>
    <property type="evidence" value="ECO:0007669"/>
    <property type="project" value="InterPro"/>
</dbReference>
<dbReference type="GO" id="GO:0003920">
    <property type="term" value="F:GMP reductase activity"/>
    <property type="evidence" value="ECO:0007669"/>
    <property type="project" value="UniProtKB-UniRule"/>
</dbReference>
<dbReference type="GO" id="GO:0046872">
    <property type="term" value="F:metal ion binding"/>
    <property type="evidence" value="ECO:0007669"/>
    <property type="project" value="UniProtKB-KW"/>
</dbReference>
<dbReference type="GO" id="GO:0006163">
    <property type="term" value="P:purine nucleotide metabolic process"/>
    <property type="evidence" value="ECO:0007669"/>
    <property type="project" value="UniProtKB-UniRule"/>
</dbReference>
<dbReference type="CDD" id="cd00381">
    <property type="entry name" value="IMPDH"/>
    <property type="match status" value="1"/>
</dbReference>
<dbReference type="FunFam" id="3.20.20.70:FF:000012">
    <property type="entry name" value="GMP reductase"/>
    <property type="match status" value="1"/>
</dbReference>
<dbReference type="Gene3D" id="3.20.20.70">
    <property type="entry name" value="Aldolase class I"/>
    <property type="match status" value="1"/>
</dbReference>
<dbReference type="HAMAP" id="MF_00596">
    <property type="entry name" value="GMP_reduct_type1"/>
    <property type="match status" value="1"/>
</dbReference>
<dbReference type="InterPro" id="IPR013785">
    <property type="entry name" value="Aldolase_TIM"/>
</dbReference>
<dbReference type="InterPro" id="IPR050139">
    <property type="entry name" value="GMP_reductase"/>
</dbReference>
<dbReference type="InterPro" id="IPR005993">
    <property type="entry name" value="GMPR"/>
</dbReference>
<dbReference type="InterPro" id="IPR015875">
    <property type="entry name" value="IMP_DH/GMP_Rdtase_CS"/>
</dbReference>
<dbReference type="InterPro" id="IPR001093">
    <property type="entry name" value="IMP_DH_GMPRt"/>
</dbReference>
<dbReference type="NCBIfam" id="TIGR01305">
    <property type="entry name" value="GMP_reduct_1"/>
    <property type="match status" value="1"/>
</dbReference>
<dbReference type="NCBIfam" id="NF003470">
    <property type="entry name" value="PRK05096.1"/>
    <property type="match status" value="1"/>
</dbReference>
<dbReference type="PANTHER" id="PTHR43170">
    <property type="entry name" value="GMP REDUCTASE"/>
    <property type="match status" value="1"/>
</dbReference>
<dbReference type="PANTHER" id="PTHR43170:SF5">
    <property type="entry name" value="GMP REDUCTASE"/>
    <property type="match status" value="1"/>
</dbReference>
<dbReference type="Pfam" id="PF00478">
    <property type="entry name" value="IMPDH"/>
    <property type="match status" value="1"/>
</dbReference>
<dbReference type="PIRSF" id="PIRSF000235">
    <property type="entry name" value="GMP_reductase"/>
    <property type="match status" value="1"/>
</dbReference>
<dbReference type="SMART" id="SM01240">
    <property type="entry name" value="IMPDH"/>
    <property type="match status" value="1"/>
</dbReference>
<dbReference type="SUPFAM" id="SSF51412">
    <property type="entry name" value="Inosine monophosphate dehydrogenase (IMPDH)"/>
    <property type="match status" value="1"/>
</dbReference>
<dbReference type="PROSITE" id="PS00487">
    <property type="entry name" value="IMP_DH_GMP_RED"/>
    <property type="match status" value="1"/>
</dbReference>
<accession>Q7MD57</accession>
<reference key="1">
    <citation type="journal article" date="2003" name="Genome Res.">
        <title>Comparative genome analysis of Vibrio vulnificus, a marine pathogen.</title>
        <authorList>
            <person name="Chen C.-Y."/>
            <person name="Wu K.-M."/>
            <person name="Chang Y.-C."/>
            <person name="Chang C.-H."/>
            <person name="Tsai H.-C."/>
            <person name="Liao T.-L."/>
            <person name="Liu Y.-M."/>
            <person name="Chen H.-J."/>
            <person name="Shen A.B.-T."/>
            <person name="Li J.-C."/>
            <person name="Su T.-L."/>
            <person name="Shao C.-P."/>
            <person name="Lee C.-T."/>
            <person name="Hor L.-I."/>
            <person name="Tsai S.-F."/>
        </authorList>
    </citation>
    <scope>NUCLEOTIDE SEQUENCE [LARGE SCALE GENOMIC DNA]</scope>
    <source>
        <strain>YJ016</strain>
    </source>
</reference>
<name>GUAC_VIBVY</name>
<proteinExistence type="inferred from homology"/>
<feature type="chain" id="PRO_0000093744" description="GMP reductase">
    <location>
        <begin position="1"/>
        <end position="348"/>
    </location>
</feature>
<feature type="active site" description="Thioimidate intermediate" evidence="1">
    <location>
        <position position="186"/>
    </location>
</feature>
<feature type="binding site" evidence="1">
    <location>
        <begin position="108"/>
        <end position="131"/>
    </location>
    <ligand>
        <name>NADP(+)</name>
        <dbReference type="ChEBI" id="CHEBI:58349"/>
    </ligand>
</feature>
<feature type="binding site" evidence="1">
    <location>
        <position position="181"/>
    </location>
    <ligand>
        <name>K(+)</name>
        <dbReference type="ChEBI" id="CHEBI:29103"/>
    </ligand>
</feature>
<feature type="binding site" evidence="1">
    <location>
        <position position="183"/>
    </location>
    <ligand>
        <name>K(+)</name>
        <dbReference type="ChEBI" id="CHEBI:29103"/>
    </ligand>
</feature>
<feature type="binding site" evidence="1">
    <location>
        <begin position="216"/>
        <end position="239"/>
    </location>
    <ligand>
        <name>NADP(+)</name>
        <dbReference type="ChEBI" id="CHEBI:58349"/>
    </ligand>
</feature>
<sequence length="348" mass="37306">MRIEQELKLGFKDVLFRPKRSTLKSRSQVNLTREFTFKHSGRQWSGVPVIAANMDSVGSFEMAKALSQHGVMTAIHKHYTVQDWADFVKDADSETLNKVMVSTGTSEADFQKTKDVMALSDELIFICIDIANGYSEHLVQYVQQVRAAFPDKVISAGNVVTGDMVEELILAGADIVKVGIGPGSVCTTRVKTGVGYPQLSAIIECADAAHGLGGRIIGDGGCACAGDVAKAFGGGADFVMLGGMLAGHEESGGEIVLKDGESYMKFYGMSSKSAMDKHSGGVAGYRAAEGKTVLLPYRGSVHGTIQDILGGVRSTCTYVGAAELRELTKRTTFIRVLEQENNVFGKEK</sequence>